<comment type="function">
    <text evidence="1 2 3">E1-like activating enzyme involved in the 2 ubiquitin-like systems required for cytoplasm to vacuole transport (Cvt) and autophagy (PubMed:22682742, PubMed:26442587). Activates ATG12 for its conjugation with ATG5 and ATG8 for its conjugation with phosphatidylethanolamine (By similarity). Both systems are needed for the ATG8 association to Cvt vesicles and autophagosomes membranes (By similarity). Autophagy is essential for maintenance of amino acid levels and protein synthesis under nitrogen starvation. Required for selective autophagic degradation of the nucleus (nucleophagy) as well as for mitophagy which contributes to regulate mitochondrial quantity and quality by eliminating the mitochondria to a basal level to fulfill cellular energy requirements and preventing excess ROS production (By similarity).</text>
</comment>
<comment type="subunit">
    <text evidence="1 3">Homodimer (By similarity). Interacts with ATG8 through a thioester bond between Cys-488 and the C-terminal Gly of ATG8 and with ATG12 through a thioester bond between Cys-488 and the C-terminal Gly of ATG12 (By similarity). Also interacts with ATG3 (By similarity).</text>
</comment>
<comment type="subcellular location">
    <subcellularLocation>
        <location evidence="1">Cytoplasm</location>
    </subcellularLocation>
    <subcellularLocation>
        <location evidence="1">Preautophagosomal structure</location>
    </subcellularLocation>
</comment>
<comment type="domain">
    <text evidence="1">The C-terminal residues 567 to 606 are required for homodimerization, as well as the interactions with ATG3, ATG8 and ATG12; and the C-terminal 17 residues are required for the ATG8 lipidation (By similarity).</text>
</comment>
<comment type="domain">
    <text evidence="1">The GxGxxG motif is important for the function, possibly through binding with ATP (By similarity).</text>
</comment>
<comment type="disruption phenotype">
    <text evidence="3">Impairs the formation of preautophagosomal structures (PubMed:26442587).</text>
</comment>
<comment type="miscellaneous">
    <text evidence="3">Kluyveromyces marxianus proteins are shorter in length and have a more ordered secondary structure than their S.cerevisiae counterparts, which might contribute to the superior thermotolerance and solubility (PubMed:26442587). K.marxianus could be therefore useful as a new model organism for further elucidation of the molecular details of autophagy (PubMed:26442587).</text>
</comment>
<comment type="similarity">
    <text evidence="5">Belongs to the ATG7 family.</text>
</comment>
<organism>
    <name type="scientific">Kluyveromyces marxianus (strain DMKU3-1042 / BCC 29191 / NBRC 104275)</name>
    <name type="common">Yeast</name>
    <name type="synonym">Candida kefyr</name>
    <dbReference type="NCBI Taxonomy" id="1003335"/>
    <lineage>
        <taxon>Eukaryota</taxon>
        <taxon>Fungi</taxon>
        <taxon>Dikarya</taxon>
        <taxon>Ascomycota</taxon>
        <taxon>Saccharomycotina</taxon>
        <taxon>Saccharomycetes</taxon>
        <taxon>Saccharomycetales</taxon>
        <taxon>Saccharomycetaceae</taxon>
        <taxon>Kluyveromyces</taxon>
    </lineage>
</organism>
<evidence type="ECO:0000250" key="1">
    <source>
        <dbReference type="UniProtKB" id="P38862"/>
    </source>
</evidence>
<evidence type="ECO:0000269" key="2">
    <source>
    </source>
</evidence>
<evidence type="ECO:0000269" key="3">
    <source>
    </source>
</evidence>
<evidence type="ECO:0000303" key="4">
    <source>
    </source>
</evidence>
<evidence type="ECO:0000305" key="5"/>
<sequence length="606" mass="68259">MVSDLKFAPSFQSFVDSSFFHELSRLKLDIFKLDSDEKALYTQLDLNQFTSNVLAISLRDDSFQKPDNDEHNIILKGYLLNFNTIELFKNCNKIQFIKEKGQELLQRGLENDLNEIISFYMISFADLKKYKFYYWICMPSFQSDGATYQIISSKVIASDSDISVSFIKQNVIIACVISGVIQKATPDNLKVCEKVVFKDFSHLKDIPSAVTKNILTVWSKLSPRETYTICFLRSDESSFEAEIIINNGNNPSLKVSGWEKNGLGKLAPKSIDLSSLMDPVKIADQAVDLNLKLMKWRIAPKIDLDGIRNTKALLLGSGTLGCYVSRVLLAWGVRHISFVDNSTVSFSNPVRQSLYNFEDCGKPKAQIASEALKRIFPSVESSGYQLEIPMIGHPVTNEKKQRQDYEALEDLIKSHDVIFLLMDARETRWLPSVLGRLHNKIVINAALGFDSYLVMRHGNDDDKLGCYFCNDILAPSDSLTDRTLDQMCTVTRPGVALLAASQAVELLVTYLQPTPNVLGTSPHQIRGFLNEFKTVSQSTPEYEHCCAGNKSVISALQENGWNFVRQALDDYKCVEKLSGLSKVQEEAELALEEDFDFSEDDEFVTG</sequence>
<reference key="1">
    <citation type="journal article" date="2015" name="Biotechnol. Biofuels">
        <title>Genetic basis of the highly efficient yeast Kluyveromyces marxianus: complete genome sequence and transcriptome analyses.</title>
        <authorList>
            <person name="Lertwattanasakul N."/>
            <person name="Kosaka T."/>
            <person name="Hosoyama A."/>
            <person name="Suzuki Y."/>
            <person name="Rodrussamee N."/>
            <person name="Matsutani M."/>
            <person name="Murata M."/>
            <person name="Fujimoto N."/>
            <person name="Suprayogi X."/>
            <person name="Tsuchikane K."/>
            <person name="Limtong S."/>
            <person name="Fujita N."/>
            <person name="Yamada M."/>
        </authorList>
    </citation>
    <scope>NUCLEOTIDE SEQUENCE [LARGE SCALE GENOMIC DNA]</scope>
    <source>
        <strain>DMKU3-1042 / BCC 29191 / NBRC 104275</strain>
    </source>
</reference>
<reference key="2">
    <citation type="journal article" date="2015" name="J. Biol. Chem.">
        <title>The thermotolerant yeast Kluyveromyces marxianus is a useful organism for structural and biochemical studies of autophagy.</title>
        <authorList>
            <person name="Yamamoto H."/>
            <person name="Shima T."/>
            <person name="Yamaguchi M."/>
            <person name="Mochizuki Y."/>
            <person name="Hoshida H."/>
            <person name="Kakuta S."/>
            <person name="Kondo-Kakuta C."/>
            <person name="Noda N.N."/>
            <person name="Inagaki F."/>
            <person name="Itoh T."/>
            <person name="Akada R."/>
            <person name="Ohsumi Y."/>
        </authorList>
    </citation>
    <scope>IDENTIFICATION</scope>
    <scope>FUNCTION</scope>
    <scope>DISRUPTION PHENOTYPE</scope>
</reference>
<reference key="3">
    <citation type="journal article" date="2012" name="Structure">
        <title>Structural insights into Atg10-mediated formation of the autophagy-essential Atg12-Atg5 conjugate.</title>
        <authorList>
            <person name="Yamaguchi M."/>
            <person name="Noda N.N."/>
            <person name="Yamamoto H."/>
            <person name="Shima T."/>
            <person name="Kumeta H."/>
            <person name="Kobashigawa Y."/>
            <person name="Akada R."/>
            <person name="Ohsumi Y."/>
            <person name="Inagaki F."/>
        </authorList>
    </citation>
    <scope>MUTAGENESIS OF CYS-488</scope>
    <scope>ACTIVE SITE</scope>
    <scope>FUNCTION</scope>
</reference>
<name>ATG7_KLUMD</name>
<accession>W0TA05</accession>
<proteinExistence type="evidence at protein level"/>
<dbReference type="EMBL" id="AP012216">
    <property type="protein sequence ID" value="BAO40457.1"/>
    <property type="molecule type" value="Genomic_DNA"/>
</dbReference>
<dbReference type="RefSeq" id="XP_022676278.1">
    <property type="nucleotide sequence ID" value="XM_022819743.1"/>
</dbReference>
<dbReference type="SMR" id="W0TA05"/>
<dbReference type="GeneID" id="34716419"/>
<dbReference type="VEuPathDB" id="FungiDB:KLMA_40433"/>
<dbReference type="OrthoDB" id="338614at2759"/>
<dbReference type="Proteomes" id="UP000065495">
    <property type="component" value="Chromosome 4"/>
</dbReference>
<dbReference type="GO" id="GO:0000407">
    <property type="term" value="C:phagophore assembly site"/>
    <property type="evidence" value="ECO:0007669"/>
    <property type="project" value="UniProtKB-SubCell"/>
</dbReference>
<dbReference type="GO" id="GO:0019778">
    <property type="term" value="F:Atg12 activating enzyme activity"/>
    <property type="evidence" value="ECO:0007669"/>
    <property type="project" value="TreeGrafter"/>
</dbReference>
<dbReference type="GO" id="GO:0019779">
    <property type="term" value="F:Atg8 activating enzyme activity"/>
    <property type="evidence" value="ECO:0007669"/>
    <property type="project" value="TreeGrafter"/>
</dbReference>
<dbReference type="GO" id="GO:0000045">
    <property type="term" value="P:autophagosome assembly"/>
    <property type="evidence" value="ECO:0007669"/>
    <property type="project" value="TreeGrafter"/>
</dbReference>
<dbReference type="GO" id="GO:0000422">
    <property type="term" value="P:autophagy of mitochondrion"/>
    <property type="evidence" value="ECO:0007669"/>
    <property type="project" value="TreeGrafter"/>
</dbReference>
<dbReference type="GO" id="GO:0006995">
    <property type="term" value="P:cellular response to nitrogen starvation"/>
    <property type="evidence" value="ECO:0007669"/>
    <property type="project" value="TreeGrafter"/>
</dbReference>
<dbReference type="GO" id="GO:0034727">
    <property type="term" value="P:piecemeal microautophagy of the nucleus"/>
    <property type="evidence" value="ECO:0007669"/>
    <property type="project" value="TreeGrafter"/>
</dbReference>
<dbReference type="GO" id="GO:0032446">
    <property type="term" value="P:protein modification by small protein conjugation"/>
    <property type="evidence" value="ECO:0007669"/>
    <property type="project" value="TreeGrafter"/>
</dbReference>
<dbReference type="GO" id="GO:0015031">
    <property type="term" value="P:protein transport"/>
    <property type="evidence" value="ECO:0007669"/>
    <property type="project" value="UniProtKB-KW"/>
</dbReference>
<dbReference type="FunFam" id="3.40.50.720:FF:000243">
    <property type="entry name" value="Ubiquitin-like modifier-activating enzyme ATG7"/>
    <property type="match status" value="1"/>
</dbReference>
<dbReference type="Gene3D" id="3.40.50.720">
    <property type="entry name" value="NAD(P)-binding Rossmann-like Domain"/>
    <property type="match status" value="1"/>
</dbReference>
<dbReference type="Gene3D" id="3.40.140.100">
    <property type="entry name" value="Ubiquitin-like modifier-activating enzyme ATG7 C-terminal domain"/>
    <property type="match status" value="1"/>
</dbReference>
<dbReference type="Gene3D" id="3.40.140.70">
    <property type="entry name" value="Ubiquitin-like modifier-activating enzyme ATG7 N-terminal domain"/>
    <property type="match status" value="1"/>
</dbReference>
<dbReference type="InterPro" id="IPR006285">
    <property type="entry name" value="Atg7"/>
</dbReference>
<dbReference type="InterPro" id="IPR032197">
    <property type="entry name" value="Atg7_N"/>
</dbReference>
<dbReference type="InterPro" id="IPR042522">
    <property type="entry name" value="Atg7_N_1"/>
</dbReference>
<dbReference type="InterPro" id="IPR042523">
    <property type="entry name" value="Atg7_N_2"/>
</dbReference>
<dbReference type="InterPro" id="IPR045886">
    <property type="entry name" value="ThiF/MoeB/HesA"/>
</dbReference>
<dbReference type="InterPro" id="IPR000594">
    <property type="entry name" value="ThiF_NAD_FAD-bd"/>
</dbReference>
<dbReference type="InterPro" id="IPR035985">
    <property type="entry name" value="Ubiquitin-activating_enz"/>
</dbReference>
<dbReference type="NCBIfam" id="TIGR01381">
    <property type="entry name" value="E1_like_apg7"/>
    <property type="match status" value="1"/>
</dbReference>
<dbReference type="PANTHER" id="PTHR10953">
    <property type="entry name" value="UBIQUITIN-ACTIVATING ENZYME E1"/>
    <property type="match status" value="1"/>
</dbReference>
<dbReference type="PANTHER" id="PTHR10953:SF3">
    <property type="entry name" value="UBIQUITIN-LIKE MODIFIER-ACTIVATING ENZYME ATG7"/>
    <property type="match status" value="1"/>
</dbReference>
<dbReference type="Pfam" id="PF16420">
    <property type="entry name" value="ATG7_N"/>
    <property type="match status" value="1"/>
</dbReference>
<dbReference type="Pfam" id="PF00899">
    <property type="entry name" value="ThiF"/>
    <property type="match status" value="1"/>
</dbReference>
<dbReference type="SUPFAM" id="SSF69572">
    <property type="entry name" value="Activating enzymes of the ubiquitin-like proteins"/>
    <property type="match status" value="1"/>
</dbReference>
<feature type="chain" id="PRO_0000443883" description="Ubiquitin-like modifier-activating enzyme ATG7">
    <location>
        <begin position="1"/>
        <end position="606"/>
    </location>
</feature>
<feature type="region of interest" description="Homodimerization" evidence="1">
    <location>
        <begin position="567"/>
        <end position="606"/>
    </location>
</feature>
<feature type="short sequence motif" description="GXGXXG motif" evidence="1">
    <location>
        <begin position="316"/>
        <end position="321"/>
    </location>
</feature>
<feature type="active site" description="Glycyl thioester intermediate" evidence="2">
    <location>
        <position position="488"/>
    </location>
</feature>
<feature type="mutagenesis site" description="Impairs the formation of the ATG12-ATG5 conjugate." evidence="2">
    <original>C</original>
    <variation>A</variation>
    <location>
        <position position="488"/>
    </location>
</feature>
<protein>
    <recommendedName>
        <fullName evidence="1">Ubiquitin-like modifier-activating enzyme ATG7</fullName>
    </recommendedName>
    <alternativeName>
        <fullName evidence="1">ATG12-activating enzyme E1 ATG7</fullName>
    </alternativeName>
    <alternativeName>
        <fullName evidence="4">Autophagy-related protein 7</fullName>
    </alternativeName>
</protein>
<keyword id="KW-0072">Autophagy</keyword>
<keyword id="KW-0963">Cytoplasm</keyword>
<keyword id="KW-0653">Protein transport</keyword>
<keyword id="KW-0813">Transport</keyword>
<gene>
    <name evidence="4" type="primary">ATG7</name>
    <name type="ORF">KLMA_40433</name>
</gene>